<gene>
    <name evidence="1" type="primary">mdtB</name>
    <name type="ordered locus">EcolC_1566</name>
</gene>
<evidence type="ECO:0000255" key="1">
    <source>
        <dbReference type="HAMAP-Rule" id="MF_01423"/>
    </source>
</evidence>
<keyword id="KW-0997">Cell inner membrane</keyword>
<keyword id="KW-1003">Cell membrane</keyword>
<keyword id="KW-0472">Membrane</keyword>
<keyword id="KW-0812">Transmembrane</keyword>
<keyword id="KW-1133">Transmembrane helix</keyword>
<keyword id="KW-0813">Transport</keyword>
<reference key="1">
    <citation type="submission" date="2008-02" db="EMBL/GenBank/DDBJ databases">
        <title>Complete sequence of Escherichia coli C str. ATCC 8739.</title>
        <authorList>
            <person name="Copeland A."/>
            <person name="Lucas S."/>
            <person name="Lapidus A."/>
            <person name="Glavina del Rio T."/>
            <person name="Dalin E."/>
            <person name="Tice H."/>
            <person name="Bruce D."/>
            <person name="Goodwin L."/>
            <person name="Pitluck S."/>
            <person name="Kiss H."/>
            <person name="Brettin T."/>
            <person name="Detter J.C."/>
            <person name="Han C."/>
            <person name="Kuske C.R."/>
            <person name="Schmutz J."/>
            <person name="Larimer F."/>
            <person name="Land M."/>
            <person name="Hauser L."/>
            <person name="Kyrpides N."/>
            <person name="Mikhailova N."/>
            <person name="Ingram L."/>
            <person name="Richardson P."/>
        </authorList>
    </citation>
    <scope>NUCLEOTIDE SEQUENCE [LARGE SCALE GENOMIC DNA]</scope>
    <source>
        <strain>ATCC 8739 / DSM 1576 / NBRC 3972 / NCIMB 8545 / WDCM 00012 / Crooks</strain>
    </source>
</reference>
<feature type="chain" id="PRO_1000087413" description="Multidrug resistance protein MdtB">
    <location>
        <begin position="1"/>
        <end position="1040"/>
    </location>
</feature>
<feature type="transmembrane region" description="Helical" evidence="1">
    <location>
        <begin position="16"/>
        <end position="36"/>
    </location>
</feature>
<feature type="transmembrane region" description="Helical" evidence="1">
    <location>
        <begin position="347"/>
        <end position="367"/>
    </location>
</feature>
<feature type="transmembrane region" description="Helical" evidence="1">
    <location>
        <begin position="369"/>
        <end position="389"/>
    </location>
</feature>
<feature type="transmembrane region" description="Helical" evidence="1">
    <location>
        <begin position="396"/>
        <end position="416"/>
    </location>
</feature>
<feature type="transmembrane region" description="Helical" evidence="1">
    <location>
        <begin position="440"/>
        <end position="460"/>
    </location>
</feature>
<feature type="transmembrane region" description="Helical" evidence="1">
    <location>
        <begin position="472"/>
        <end position="492"/>
    </location>
</feature>
<feature type="transmembrane region" description="Helical" evidence="1">
    <location>
        <begin position="537"/>
        <end position="557"/>
    </location>
</feature>
<feature type="transmembrane region" description="Helical" evidence="1">
    <location>
        <begin position="863"/>
        <end position="883"/>
    </location>
</feature>
<feature type="transmembrane region" description="Helical" evidence="1">
    <location>
        <begin position="888"/>
        <end position="908"/>
    </location>
</feature>
<feature type="transmembrane region" description="Helical" evidence="1">
    <location>
        <begin position="911"/>
        <end position="931"/>
    </location>
</feature>
<feature type="transmembrane region" description="Helical" evidence="1">
    <location>
        <begin position="968"/>
        <end position="988"/>
    </location>
</feature>
<feature type="transmembrane region" description="Helical" evidence="1">
    <location>
        <begin position="998"/>
        <end position="1018"/>
    </location>
</feature>
<name>MDTB_ECOLC</name>
<comment type="function">
    <text evidence="1">The MdtABC tripartite complex confers resistance against novobiocin and deoxycholate.</text>
</comment>
<comment type="subunit">
    <text evidence="1">Part of a tripartite efflux system composed of MdtA, MdtB and MdtC. MdtB forms a heteromultimer with MdtC.</text>
</comment>
<comment type="subcellular location">
    <subcellularLocation>
        <location evidence="1">Cell inner membrane</location>
        <topology evidence="1">Multi-pass membrane protein</topology>
    </subcellularLocation>
</comment>
<comment type="induction">
    <text>The mdtABC operon is transcriptionally activated by BaeR.</text>
</comment>
<comment type="similarity">
    <text evidence="1">Belongs to the resistance-nodulation-cell division (RND) (TC 2.A.6) family. MdtB subfamily.</text>
</comment>
<accession>B1IYZ9</accession>
<dbReference type="EMBL" id="CP000946">
    <property type="protein sequence ID" value="ACA77225.1"/>
    <property type="molecule type" value="Genomic_DNA"/>
</dbReference>
<dbReference type="RefSeq" id="WP_001197875.1">
    <property type="nucleotide sequence ID" value="NZ_MTFT01000031.1"/>
</dbReference>
<dbReference type="SMR" id="B1IYZ9"/>
<dbReference type="KEGG" id="ecl:EcolC_1566"/>
<dbReference type="HOGENOM" id="CLU_002755_1_2_6"/>
<dbReference type="GO" id="GO:0005886">
    <property type="term" value="C:plasma membrane"/>
    <property type="evidence" value="ECO:0007669"/>
    <property type="project" value="UniProtKB-SubCell"/>
</dbReference>
<dbReference type="GO" id="GO:0042910">
    <property type="term" value="F:xenobiotic transmembrane transporter activity"/>
    <property type="evidence" value="ECO:0007669"/>
    <property type="project" value="TreeGrafter"/>
</dbReference>
<dbReference type="FunFam" id="1.20.1640.10:FF:000001">
    <property type="entry name" value="Efflux pump membrane transporter"/>
    <property type="match status" value="1"/>
</dbReference>
<dbReference type="FunFam" id="3.30.70.1430:FF:000001">
    <property type="entry name" value="Efflux pump membrane transporter"/>
    <property type="match status" value="1"/>
</dbReference>
<dbReference type="FunFam" id="3.30.2090.10:FF:000003">
    <property type="entry name" value="Multidrug resistance protein MdtB"/>
    <property type="match status" value="1"/>
</dbReference>
<dbReference type="FunFam" id="3.30.2090.10:FF:000006">
    <property type="entry name" value="Multidrug resistance protein MdtB"/>
    <property type="match status" value="1"/>
</dbReference>
<dbReference type="Gene3D" id="3.30.70.1430">
    <property type="entry name" value="Multidrug efflux transporter AcrB pore domain"/>
    <property type="match status" value="2"/>
</dbReference>
<dbReference type="Gene3D" id="3.30.70.1440">
    <property type="entry name" value="Multidrug efflux transporter AcrB pore domain"/>
    <property type="match status" value="1"/>
</dbReference>
<dbReference type="Gene3D" id="3.30.70.1320">
    <property type="entry name" value="Multidrug efflux transporter AcrB pore domain like"/>
    <property type="match status" value="1"/>
</dbReference>
<dbReference type="Gene3D" id="3.30.2090.10">
    <property type="entry name" value="Multidrug efflux transporter AcrB TolC docking domain, DN and DC subdomains"/>
    <property type="match status" value="2"/>
</dbReference>
<dbReference type="Gene3D" id="1.20.1640.10">
    <property type="entry name" value="Multidrug efflux transporter AcrB transmembrane domain"/>
    <property type="match status" value="2"/>
</dbReference>
<dbReference type="HAMAP" id="MF_01423">
    <property type="entry name" value="MdtB"/>
    <property type="match status" value="1"/>
</dbReference>
<dbReference type="InterPro" id="IPR027463">
    <property type="entry name" value="AcrB_DN_DC_subdom"/>
</dbReference>
<dbReference type="InterPro" id="IPR001036">
    <property type="entry name" value="Acrflvin-R"/>
</dbReference>
<dbReference type="InterPro" id="IPR022831">
    <property type="entry name" value="Multidrug-R_MdtB"/>
</dbReference>
<dbReference type="NCBIfam" id="NF007798">
    <property type="entry name" value="PRK10503.1"/>
    <property type="match status" value="1"/>
</dbReference>
<dbReference type="NCBIfam" id="NF033617">
    <property type="entry name" value="RND_permease_2"/>
    <property type="match status" value="1"/>
</dbReference>
<dbReference type="PANTHER" id="PTHR32063">
    <property type="match status" value="1"/>
</dbReference>
<dbReference type="PANTHER" id="PTHR32063:SF21">
    <property type="entry name" value="MULTIDRUG RESISTANCE PROTEIN MDTB"/>
    <property type="match status" value="1"/>
</dbReference>
<dbReference type="Pfam" id="PF00873">
    <property type="entry name" value="ACR_tran"/>
    <property type="match status" value="1"/>
</dbReference>
<dbReference type="PRINTS" id="PR00702">
    <property type="entry name" value="ACRIFLAVINRP"/>
</dbReference>
<dbReference type="SUPFAM" id="SSF82693">
    <property type="entry name" value="Multidrug efflux transporter AcrB pore domain, PN1, PN2, PC1 and PC2 subdomains"/>
    <property type="match status" value="3"/>
</dbReference>
<dbReference type="SUPFAM" id="SSF82714">
    <property type="entry name" value="Multidrug efflux transporter AcrB TolC docking domain, DN and DC subdomains"/>
    <property type="match status" value="2"/>
</dbReference>
<dbReference type="SUPFAM" id="SSF82866">
    <property type="entry name" value="Multidrug efflux transporter AcrB transmembrane domain"/>
    <property type="match status" value="2"/>
</dbReference>
<sequence length="1040" mass="112078">MQVLPPSSTGGPSRLFIMRPVATTLLMVAILLAGIIGYRALPVSALPEVDYPTIQVVTLYPGASPDVMTSAVTAPLERQFGQMSGLKQMSSQSSGGASVITLQFQLTLPLDVAEQEVQAAINAATNLLPSDLPNPPVYSKVNPADPPIMTLAVTSTAMPMTQVEDMVETRVAQKISQISGVGLVTLSGGQRPAVRVKLNAQAIAALGLTSETVRTAITGANVNSAKGSLDGPSRAVTLSANDQMQSAEEYRQLIIAYQNGAPIRLGDVATVEQGAENSWLGAWANKEQAIVMNVQRQPGANIISTADSIRQMLPQLTESLPKSVKVTVLSDRTTNIRASVDDTQFELMMAIALVVMIIYLFLRNIPATIIPGVAVPLSLIGTFAVMVFLDFSINNLTLMALTIATGFVVDDAIVVIENISRYIEKGEKPLAAALKGAGEIGFTIISLTFSLIAVLIPLLFMGDIVGRLFREFAITLAVAILISAVVSLTLTPMMCARMLSQESLRKQNRFSRASEKMFDRIIAAYGRGLAKVLNHPWLTLSVALSTLLLSVLLWVFIPKGFFPVQDNGIIQGTLQAPQSSSFANMAQRQRQVADVILQDPAVQSLTSFVGVDGTNPSLNSARLQINLKPLDERDDRVQKVIARLQTAVDKVPGVDLFLQPTQDLTIDTQVSRTQYQFTLQATSLDALSTWVPQLMEKLQQLPQLSDVSSDWQDKGLVAYVNVDRDSASRLGISMADVDNALYNAFGQRLISTIYTQANQYRVVLEHNTENTPGLAALDTIRLTSSDGGVVPLSSIAKIEQRFAPLSINHLDQFPVTTISFNVPDNYSLGDAVQAIMDTEKTLNLPVDITTQFQGSTLAFQSALGSTVWLIVAAVVAMYIVLGILYESFIHPITILSTLPTAGVGALLALLIAGSELDVIAIIGIILLIGIVKKNAIMMIDFALAAEREQGMSPREAIYQACLLRFRPILMTTLAALLGALPLMLSTGVGAELRRPLGIGMVGGLIVSQVLTLFTTPVIYLLFDRLALWTKSRFARHEEEA</sequence>
<organism>
    <name type="scientific">Escherichia coli (strain ATCC 8739 / DSM 1576 / NBRC 3972 / NCIMB 8545 / WDCM 00012 / Crooks)</name>
    <dbReference type="NCBI Taxonomy" id="481805"/>
    <lineage>
        <taxon>Bacteria</taxon>
        <taxon>Pseudomonadati</taxon>
        <taxon>Pseudomonadota</taxon>
        <taxon>Gammaproteobacteria</taxon>
        <taxon>Enterobacterales</taxon>
        <taxon>Enterobacteriaceae</taxon>
        <taxon>Escherichia</taxon>
    </lineage>
</organism>
<proteinExistence type="evidence at transcript level"/>
<protein>
    <recommendedName>
        <fullName evidence="1">Multidrug resistance protein MdtB</fullName>
    </recommendedName>
    <alternativeName>
        <fullName evidence="1">Multidrug transporter MdtB</fullName>
    </alternativeName>
</protein>